<name>CYSC_ECO45</name>
<comment type="function">
    <text evidence="1">Catalyzes the synthesis of activated sulfate.</text>
</comment>
<comment type="catalytic activity">
    <reaction evidence="1">
        <text>adenosine 5'-phosphosulfate + ATP = 3'-phosphoadenylyl sulfate + ADP + H(+)</text>
        <dbReference type="Rhea" id="RHEA:24152"/>
        <dbReference type="ChEBI" id="CHEBI:15378"/>
        <dbReference type="ChEBI" id="CHEBI:30616"/>
        <dbReference type="ChEBI" id="CHEBI:58243"/>
        <dbReference type="ChEBI" id="CHEBI:58339"/>
        <dbReference type="ChEBI" id="CHEBI:456216"/>
        <dbReference type="EC" id="2.7.1.25"/>
    </reaction>
</comment>
<comment type="pathway">
    <text evidence="1">Sulfur metabolism; hydrogen sulfide biosynthesis; sulfite from sulfate: step 2/3.</text>
</comment>
<comment type="similarity">
    <text evidence="1">Belongs to the APS kinase family.</text>
</comment>
<reference key="1">
    <citation type="journal article" date="2009" name="PLoS Genet.">
        <title>Organised genome dynamics in the Escherichia coli species results in highly diverse adaptive paths.</title>
        <authorList>
            <person name="Touchon M."/>
            <person name="Hoede C."/>
            <person name="Tenaillon O."/>
            <person name="Barbe V."/>
            <person name="Baeriswyl S."/>
            <person name="Bidet P."/>
            <person name="Bingen E."/>
            <person name="Bonacorsi S."/>
            <person name="Bouchier C."/>
            <person name="Bouvet O."/>
            <person name="Calteau A."/>
            <person name="Chiapello H."/>
            <person name="Clermont O."/>
            <person name="Cruveiller S."/>
            <person name="Danchin A."/>
            <person name="Diard M."/>
            <person name="Dossat C."/>
            <person name="Karoui M.E."/>
            <person name="Frapy E."/>
            <person name="Garry L."/>
            <person name="Ghigo J.M."/>
            <person name="Gilles A.M."/>
            <person name="Johnson J."/>
            <person name="Le Bouguenec C."/>
            <person name="Lescat M."/>
            <person name="Mangenot S."/>
            <person name="Martinez-Jehanne V."/>
            <person name="Matic I."/>
            <person name="Nassif X."/>
            <person name="Oztas S."/>
            <person name="Petit M.A."/>
            <person name="Pichon C."/>
            <person name="Rouy Z."/>
            <person name="Ruf C.S."/>
            <person name="Schneider D."/>
            <person name="Tourret J."/>
            <person name="Vacherie B."/>
            <person name="Vallenet D."/>
            <person name="Medigue C."/>
            <person name="Rocha E.P.C."/>
            <person name="Denamur E."/>
        </authorList>
    </citation>
    <scope>NUCLEOTIDE SEQUENCE [LARGE SCALE GENOMIC DNA]</scope>
    <source>
        <strain>S88 / ExPEC</strain>
    </source>
</reference>
<accession>B7MKM4</accession>
<gene>
    <name evidence="1" type="primary">cysC</name>
    <name type="ordered locus">ECS88_3021</name>
</gene>
<evidence type="ECO:0000255" key="1">
    <source>
        <dbReference type="HAMAP-Rule" id="MF_00065"/>
    </source>
</evidence>
<evidence type="ECO:0000256" key="2">
    <source>
        <dbReference type="SAM" id="MobiDB-lite"/>
    </source>
</evidence>
<organism>
    <name type="scientific">Escherichia coli O45:K1 (strain S88 / ExPEC)</name>
    <dbReference type="NCBI Taxonomy" id="585035"/>
    <lineage>
        <taxon>Bacteria</taxon>
        <taxon>Pseudomonadati</taxon>
        <taxon>Pseudomonadota</taxon>
        <taxon>Gammaproteobacteria</taxon>
        <taxon>Enterobacterales</taxon>
        <taxon>Enterobacteriaceae</taxon>
        <taxon>Escherichia</taxon>
    </lineage>
</organism>
<protein>
    <recommendedName>
        <fullName evidence="1">Adenylyl-sulfate kinase</fullName>
        <ecNumber evidence="1">2.7.1.25</ecNumber>
    </recommendedName>
    <alternativeName>
        <fullName evidence="1">APS kinase</fullName>
    </alternativeName>
    <alternativeName>
        <fullName evidence="1">ATP adenosine-5'-phosphosulfate 3'-phosphotransferase</fullName>
    </alternativeName>
    <alternativeName>
        <fullName evidence="1">Adenosine-5'-phosphosulfate kinase</fullName>
    </alternativeName>
</protein>
<sequence>MALHDENVVWHSHPVTPQQREQHHGHRGVVLWFTGLSGSGKSTVAGALEEALHKLGVSTYLLDGDNVRHGLCSDLGFSDADRKENIRRVGEVANLMVEAGLVVLTAFISPHRAERQMVRERVGEGRFIEVFVDTPLAICEARDPKGLYKKARAGELRNFTGIDSVYEAPESAEIHLNGEQLVTNLVQQLLDLLRQNDIIRS</sequence>
<keyword id="KW-0067">ATP-binding</keyword>
<keyword id="KW-0418">Kinase</keyword>
<keyword id="KW-0547">Nucleotide-binding</keyword>
<keyword id="KW-0597">Phosphoprotein</keyword>
<keyword id="KW-1185">Reference proteome</keyword>
<keyword id="KW-0808">Transferase</keyword>
<dbReference type="EC" id="2.7.1.25" evidence="1"/>
<dbReference type="EMBL" id="CU928161">
    <property type="protein sequence ID" value="CAR04265.1"/>
    <property type="molecule type" value="Genomic_DNA"/>
</dbReference>
<dbReference type="RefSeq" id="WP_001173653.1">
    <property type="nucleotide sequence ID" value="NC_011742.1"/>
</dbReference>
<dbReference type="SMR" id="B7MKM4"/>
<dbReference type="KEGG" id="ecz:ECS88_3021"/>
<dbReference type="HOGENOM" id="CLU_046932_1_0_6"/>
<dbReference type="UniPathway" id="UPA00140">
    <property type="reaction ID" value="UER00205"/>
</dbReference>
<dbReference type="Proteomes" id="UP000000747">
    <property type="component" value="Chromosome"/>
</dbReference>
<dbReference type="GO" id="GO:0004020">
    <property type="term" value="F:adenylylsulfate kinase activity"/>
    <property type="evidence" value="ECO:0007669"/>
    <property type="project" value="UniProtKB-UniRule"/>
</dbReference>
<dbReference type="GO" id="GO:0005524">
    <property type="term" value="F:ATP binding"/>
    <property type="evidence" value="ECO:0007669"/>
    <property type="project" value="UniProtKB-UniRule"/>
</dbReference>
<dbReference type="GO" id="GO:0070814">
    <property type="term" value="P:hydrogen sulfide biosynthetic process"/>
    <property type="evidence" value="ECO:0007669"/>
    <property type="project" value="UniProtKB-UniRule"/>
</dbReference>
<dbReference type="GO" id="GO:0000103">
    <property type="term" value="P:sulfate assimilation"/>
    <property type="evidence" value="ECO:0007669"/>
    <property type="project" value="UniProtKB-UniRule"/>
</dbReference>
<dbReference type="CDD" id="cd02027">
    <property type="entry name" value="APSK"/>
    <property type="match status" value="1"/>
</dbReference>
<dbReference type="FunFam" id="3.40.50.300:FF:000212">
    <property type="entry name" value="Adenylyl-sulfate kinase"/>
    <property type="match status" value="1"/>
</dbReference>
<dbReference type="Gene3D" id="3.40.50.300">
    <property type="entry name" value="P-loop containing nucleotide triphosphate hydrolases"/>
    <property type="match status" value="1"/>
</dbReference>
<dbReference type="HAMAP" id="MF_00065">
    <property type="entry name" value="Adenylyl_sulf_kinase"/>
    <property type="match status" value="1"/>
</dbReference>
<dbReference type="InterPro" id="IPR002891">
    <property type="entry name" value="APS_kinase"/>
</dbReference>
<dbReference type="InterPro" id="IPR027417">
    <property type="entry name" value="P-loop_NTPase"/>
</dbReference>
<dbReference type="NCBIfam" id="TIGR00455">
    <property type="entry name" value="apsK"/>
    <property type="match status" value="1"/>
</dbReference>
<dbReference type="NCBIfam" id="NF003013">
    <property type="entry name" value="PRK03846.1"/>
    <property type="match status" value="1"/>
</dbReference>
<dbReference type="PANTHER" id="PTHR11055:SF63">
    <property type="entry name" value="ADENYLYL-SULFATE KINASE 1, CHLOROPLASTIC"/>
    <property type="match status" value="1"/>
</dbReference>
<dbReference type="PANTHER" id="PTHR11055">
    <property type="entry name" value="BIFUNCTIONAL 3'-PHOSPHOADENOSINE 5'-PHOSPHOSULFATE SYNTHASE"/>
    <property type="match status" value="1"/>
</dbReference>
<dbReference type="Pfam" id="PF01583">
    <property type="entry name" value="APS_kinase"/>
    <property type="match status" value="1"/>
</dbReference>
<dbReference type="SUPFAM" id="SSF52540">
    <property type="entry name" value="P-loop containing nucleoside triphosphate hydrolases"/>
    <property type="match status" value="1"/>
</dbReference>
<proteinExistence type="inferred from homology"/>
<feature type="chain" id="PRO_1000116966" description="Adenylyl-sulfate kinase">
    <location>
        <begin position="1"/>
        <end position="201"/>
    </location>
</feature>
<feature type="region of interest" description="Disordered" evidence="2">
    <location>
        <begin position="1"/>
        <end position="23"/>
    </location>
</feature>
<feature type="active site" description="Phosphoserine intermediate" evidence="1">
    <location>
        <position position="109"/>
    </location>
</feature>
<feature type="binding site" evidence="1">
    <location>
        <begin position="35"/>
        <end position="42"/>
    </location>
    <ligand>
        <name>ATP</name>
        <dbReference type="ChEBI" id="CHEBI:30616"/>
    </ligand>
</feature>